<dbReference type="EMBL" id="AB065802">
    <property type="protein sequence ID" value="BAC06021.1"/>
    <property type="molecule type" value="Genomic_DNA"/>
</dbReference>
<dbReference type="EMBL" id="BC136998">
    <property type="protein sequence ID" value="AAI36999.1"/>
    <property type="molecule type" value="mRNA"/>
</dbReference>
<dbReference type="EMBL" id="BK004383">
    <property type="protein sequence ID" value="DAA04781.1"/>
    <property type="molecule type" value="Genomic_DNA"/>
</dbReference>
<dbReference type="CCDS" id="CCDS31386.2"/>
<dbReference type="RefSeq" id="NP_001005289.2">
    <property type="nucleotide sequence ID" value="NM_001005289.5"/>
</dbReference>
<dbReference type="SMR" id="Q8NGJ2"/>
<dbReference type="FunCoup" id="Q8NGJ2">
    <property type="interactions" value="464"/>
</dbReference>
<dbReference type="STRING" id="9606.ENSP00000493308"/>
<dbReference type="GlyCosmos" id="Q8NGJ2">
    <property type="glycosylation" value="2 sites, No reported glycans"/>
</dbReference>
<dbReference type="GlyGen" id="Q8NGJ2">
    <property type="glycosylation" value="2 sites"/>
</dbReference>
<dbReference type="PhosphoSitePlus" id="Q8NGJ2"/>
<dbReference type="BioMuta" id="OR52H1"/>
<dbReference type="DMDM" id="223590251"/>
<dbReference type="PaxDb" id="9606-ENSP00000326259"/>
<dbReference type="Antibodypedia" id="66901">
    <property type="antibodies" value="63 antibodies from 16 providers"/>
</dbReference>
<dbReference type="DNASU" id="390067"/>
<dbReference type="Ensembl" id="ENST00000322653.7">
    <property type="protein sequence ID" value="ENSP00000326259.5"/>
    <property type="gene ID" value="ENSG00000181616.10"/>
</dbReference>
<dbReference type="Ensembl" id="ENST00000641796.2">
    <property type="protein sequence ID" value="ENSP00000493308.2"/>
    <property type="gene ID" value="ENSG00000181616.10"/>
</dbReference>
<dbReference type="GeneID" id="390067"/>
<dbReference type="KEGG" id="hsa:390067"/>
<dbReference type="MANE-Select" id="ENST00000322653.7">
    <property type="protein sequence ID" value="ENSP00000326259.5"/>
    <property type="RefSeq nucleotide sequence ID" value="NM_001005289.5"/>
    <property type="RefSeq protein sequence ID" value="NP_001005289.2"/>
</dbReference>
<dbReference type="UCSC" id="uc010qzh.2">
    <property type="organism name" value="human"/>
</dbReference>
<dbReference type="AGR" id="HGNC:15218"/>
<dbReference type="CTD" id="390067"/>
<dbReference type="DisGeNET" id="390067"/>
<dbReference type="GeneCards" id="OR52H1"/>
<dbReference type="HGNC" id="HGNC:15218">
    <property type="gene designation" value="OR52H1"/>
</dbReference>
<dbReference type="HPA" id="ENSG00000181616">
    <property type="expression patterns" value="Not detected"/>
</dbReference>
<dbReference type="neXtProt" id="NX_Q8NGJ2"/>
<dbReference type="OpenTargets" id="ENSG00000181616"/>
<dbReference type="PharmGKB" id="PA32410"/>
<dbReference type="VEuPathDB" id="HostDB:ENSG00000181616"/>
<dbReference type="eggNOG" id="ENOG502QW9N">
    <property type="taxonomic scope" value="Eukaryota"/>
</dbReference>
<dbReference type="GeneTree" id="ENSGT01090000260043"/>
<dbReference type="HOGENOM" id="CLU_012526_0_0_1"/>
<dbReference type="InParanoid" id="Q8NGJ2"/>
<dbReference type="OMA" id="SHVWIGI"/>
<dbReference type="OrthoDB" id="5969463at2759"/>
<dbReference type="PAN-GO" id="Q8NGJ2">
    <property type="GO annotations" value="0 GO annotations based on evolutionary models"/>
</dbReference>
<dbReference type="PhylomeDB" id="Q8NGJ2"/>
<dbReference type="TreeFam" id="TF343679"/>
<dbReference type="PathwayCommons" id="Q8NGJ2"/>
<dbReference type="Reactome" id="R-HSA-9752946">
    <property type="pathway name" value="Expression and translocation of olfactory receptors"/>
</dbReference>
<dbReference type="BioGRID-ORCS" id="390067">
    <property type="hits" value="9 hits in 745 CRISPR screens"/>
</dbReference>
<dbReference type="GeneWiki" id="OR52H1"/>
<dbReference type="GenomeRNAi" id="390067"/>
<dbReference type="Pharos" id="Q8NGJ2">
    <property type="development level" value="Tdark"/>
</dbReference>
<dbReference type="PRO" id="PR:Q8NGJ2"/>
<dbReference type="Proteomes" id="UP000005640">
    <property type="component" value="Chromosome 11"/>
</dbReference>
<dbReference type="RNAct" id="Q8NGJ2">
    <property type="molecule type" value="protein"/>
</dbReference>
<dbReference type="Bgee" id="ENSG00000181616">
    <property type="expression patterns" value="Expressed in sural nerve and 4 other cell types or tissues"/>
</dbReference>
<dbReference type="ExpressionAtlas" id="Q8NGJ2">
    <property type="expression patterns" value="baseline and differential"/>
</dbReference>
<dbReference type="GO" id="GO:0005886">
    <property type="term" value="C:plasma membrane"/>
    <property type="evidence" value="ECO:0000318"/>
    <property type="project" value="GO_Central"/>
</dbReference>
<dbReference type="GO" id="GO:0004930">
    <property type="term" value="F:G protein-coupled receptor activity"/>
    <property type="evidence" value="ECO:0007669"/>
    <property type="project" value="UniProtKB-KW"/>
</dbReference>
<dbReference type="GO" id="GO:0004984">
    <property type="term" value="F:olfactory receptor activity"/>
    <property type="evidence" value="ECO:0000318"/>
    <property type="project" value="GO_Central"/>
</dbReference>
<dbReference type="CDD" id="cd15221">
    <property type="entry name" value="7tmA_OR52B-like"/>
    <property type="match status" value="1"/>
</dbReference>
<dbReference type="FunFam" id="1.20.1070.10:FF:000006">
    <property type="entry name" value="Olfactory receptor"/>
    <property type="match status" value="1"/>
</dbReference>
<dbReference type="Gene3D" id="1.20.1070.10">
    <property type="entry name" value="Rhodopsin 7-helix transmembrane proteins"/>
    <property type="match status" value="1"/>
</dbReference>
<dbReference type="InterPro" id="IPR000276">
    <property type="entry name" value="GPCR_Rhodpsn"/>
</dbReference>
<dbReference type="InterPro" id="IPR017452">
    <property type="entry name" value="GPCR_Rhodpsn_7TM"/>
</dbReference>
<dbReference type="InterPro" id="IPR000725">
    <property type="entry name" value="Olfact_rcpt"/>
</dbReference>
<dbReference type="InterPro" id="IPR050402">
    <property type="entry name" value="OR51/52/56-like"/>
</dbReference>
<dbReference type="PANTHER" id="PTHR26450:SF123">
    <property type="entry name" value="OLFACTORY RECEPTOR 52H1"/>
    <property type="match status" value="1"/>
</dbReference>
<dbReference type="PANTHER" id="PTHR26450">
    <property type="entry name" value="OLFACTORY RECEPTOR 56B1-RELATED"/>
    <property type="match status" value="1"/>
</dbReference>
<dbReference type="Pfam" id="PF13853">
    <property type="entry name" value="7tm_4"/>
    <property type="match status" value="1"/>
</dbReference>
<dbReference type="PRINTS" id="PR00237">
    <property type="entry name" value="GPCRRHODOPSN"/>
</dbReference>
<dbReference type="PRINTS" id="PR00245">
    <property type="entry name" value="OLFACTORYR"/>
</dbReference>
<dbReference type="SUPFAM" id="SSF81321">
    <property type="entry name" value="Family A G protein-coupled receptor-like"/>
    <property type="match status" value="1"/>
</dbReference>
<dbReference type="PROSITE" id="PS50262">
    <property type="entry name" value="G_PROTEIN_RECEP_F1_2"/>
    <property type="match status" value="1"/>
</dbReference>
<sequence>MIIFNLSSYNPGPFILVGIPGLEQFHVWIGIPFCIIYIVAVVGNCILLYLIVVEHSLHEPMFFFLSMLAMTDLILSTAGVPKALSIFWLGAREITFPGCLTQMFFLHYNFVLDSAILMAMAFDHYVAICSPLRYTTILTPKTIIKSAMGISFRSFCIILPDVFLLTCLPFCRTRIIPHTYCEHIGVAQLACADISINFWYGFCVPIMTVISDVILIAVSYAHILCAVFGLPSQDACQKALGTCGSHVCVILMFYTPAFFSILAHRFGHNVSRTFHIMFANLYIVIPPALNPMVYGVKTKQIRDKVILLFSKGTG</sequence>
<organism>
    <name type="scientific">Homo sapiens</name>
    <name type="common">Human</name>
    <dbReference type="NCBI Taxonomy" id="9606"/>
    <lineage>
        <taxon>Eukaryota</taxon>
        <taxon>Metazoa</taxon>
        <taxon>Chordata</taxon>
        <taxon>Craniata</taxon>
        <taxon>Vertebrata</taxon>
        <taxon>Euteleostomi</taxon>
        <taxon>Mammalia</taxon>
        <taxon>Eutheria</taxon>
        <taxon>Euarchontoglires</taxon>
        <taxon>Primates</taxon>
        <taxon>Haplorrhini</taxon>
        <taxon>Catarrhini</taxon>
        <taxon>Hominidae</taxon>
        <taxon>Homo</taxon>
    </lineage>
</organism>
<protein>
    <recommendedName>
        <fullName>Olfactory receptor 52H1</fullName>
    </recommendedName>
    <alternativeName>
        <fullName>Olfactory receptor OR11-45</fullName>
    </alternativeName>
</protein>
<reference key="1">
    <citation type="submission" date="2001-07" db="EMBL/GenBank/DDBJ databases">
        <title>Genome-wide discovery and analysis of human seven transmembrane helix receptor genes.</title>
        <authorList>
            <person name="Suwa M."/>
            <person name="Sato T."/>
            <person name="Okouchi I."/>
            <person name="Arita M."/>
            <person name="Futami K."/>
            <person name="Matsumoto S."/>
            <person name="Tsutsumi S."/>
            <person name="Aburatani H."/>
            <person name="Asai K."/>
            <person name="Akiyama Y."/>
        </authorList>
    </citation>
    <scope>NUCLEOTIDE SEQUENCE [GENOMIC DNA]</scope>
</reference>
<reference key="2">
    <citation type="journal article" date="2004" name="Genome Res.">
        <title>The status, quality, and expansion of the NIH full-length cDNA project: the Mammalian Gene Collection (MGC).</title>
        <authorList>
            <consortium name="The MGC Project Team"/>
        </authorList>
    </citation>
    <scope>NUCLEOTIDE SEQUENCE [LARGE SCALE MRNA]</scope>
    <source>
        <tissue>Testis</tissue>
    </source>
</reference>
<reference key="3">
    <citation type="journal article" date="2004" name="Proc. Natl. Acad. Sci. U.S.A.">
        <title>The human olfactory receptor gene family.</title>
        <authorList>
            <person name="Malnic B."/>
            <person name="Godfrey P.A."/>
            <person name="Buck L.B."/>
        </authorList>
    </citation>
    <scope>IDENTIFICATION</scope>
</reference>
<reference key="4">
    <citation type="journal article" date="2004" name="Proc. Natl. Acad. Sci. U.S.A.">
        <authorList>
            <person name="Malnic B."/>
            <person name="Godfrey P.A."/>
            <person name="Buck L.B."/>
        </authorList>
    </citation>
    <scope>ERRATUM OF PUBMED:14983052</scope>
</reference>
<name>O52H1_HUMAN</name>
<evidence type="ECO:0000255" key="1"/>
<evidence type="ECO:0000255" key="2">
    <source>
        <dbReference type="PROSITE-ProRule" id="PRU00521"/>
    </source>
</evidence>
<evidence type="ECO:0000305" key="3"/>
<proteinExistence type="evidence at transcript level"/>
<keyword id="KW-1015">Disulfide bond</keyword>
<keyword id="KW-0297">G-protein coupled receptor</keyword>
<keyword id="KW-0325">Glycoprotein</keyword>
<keyword id="KW-0472">Membrane</keyword>
<keyword id="KW-0552">Olfaction</keyword>
<keyword id="KW-0675">Receptor</keyword>
<keyword id="KW-1185">Reference proteome</keyword>
<keyword id="KW-0716">Sensory transduction</keyword>
<keyword id="KW-0807">Transducer</keyword>
<keyword id="KW-0812">Transmembrane</keyword>
<keyword id="KW-1133">Transmembrane helix</keyword>
<comment type="function">
    <text evidence="3">Odorant receptor.</text>
</comment>
<comment type="subcellular location">
    <subcellularLocation>
        <location evidence="1">Membrane</location>
        <topology evidence="1">Multi-pass membrane protein</topology>
    </subcellularLocation>
</comment>
<comment type="similarity">
    <text evidence="2">Belongs to the G-protein coupled receptor 1 family.</text>
</comment>
<comment type="online information" name="Human Olfactory Receptor Data Exploratorium (HORDE)">
    <link uri="http://genome.weizmann.ac.il/horde/card/index/symbol:OR52H1"/>
</comment>
<gene>
    <name type="primary">OR52H1</name>
</gene>
<feature type="chain" id="PRO_0000150777" description="Olfactory receptor 52H1">
    <location>
        <begin position="1"/>
        <end position="314"/>
    </location>
</feature>
<feature type="topological domain" description="Extracellular" evidence="3">
    <location>
        <begin position="1"/>
        <end position="32"/>
    </location>
</feature>
<feature type="transmembrane region" description="Helical" evidence="1">
    <location>
        <begin position="33"/>
        <end position="53"/>
    </location>
</feature>
<feature type="topological domain" description="Cytoplasmic" evidence="3">
    <location>
        <begin position="54"/>
        <end position="59"/>
    </location>
</feature>
<feature type="transmembrane region" description="Helical" evidence="1">
    <location>
        <begin position="60"/>
        <end position="80"/>
    </location>
</feature>
<feature type="topological domain" description="Extracellular" evidence="3">
    <location>
        <begin position="81"/>
        <end position="101"/>
    </location>
</feature>
<feature type="transmembrane region" description="Helical" evidence="1">
    <location>
        <begin position="102"/>
        <end position="122"/>
    </location>
</feature>
<feature type="topological domain" description="Cytoplasmic" evidence="3">
    <location>
        <begin position="123"/>
        <end position="149"/>
    </location>
</feature>
<feature type="transmembrane region" description="Helical" evidence="1">
    <location>
        <begin position="150"/>
        <end position="170"/>
    </location>
</feature>
<feature type="topological domain" description="Extracellular" evidence="3">
    <location>
        <begin position="171"/>
        <end position="197"/>
    </location>
</feature>
<feature type="transmembrane region" description="Helical" evidence="1">
    <location>
        <begin position="198"/>
        <end position="218"/>
    </location>
</feature>
<feature type="topological domain" description="Cytoplasmic" evidence="3">
    <location>
        <begin position="219"/>
        <end position="242"/>
    </location>
</feature>
<feature type="transmembrane region" description="Helical" evidence="1">
    <location>
        <begin position="243"/>
        <end position="263"/>
    </location>
</feature>
<feature type="topological domain" description="Extracellular" evidence="3">
    <location>
        <begin position="264"/>
        <end position="275"/>
    </location>
</feature>
<feature type="transmembrane region" description="Helical" evidence="1">
    <location>
        <begin position="276"/>
        <end position="296"/>
    </location>
</feature>
<feature type="topological domain" description="Cytoplasmic" evidence="3">
    <location>
        <begin position="297"/>
        <end position="314"/>
    </location>
</feature>
<feature type="glycosylation site" description="N-linked (GlcNAc...) asparagine" evidence="1">
    <location>
        <position position="5"/>
    </location>
</feature>
<feature type="glycosylation site" description="N-linked (GlcNAc...) asparagine" evidence="1">
    <location>
        <position position="269"/>
    </location>
</feature>
<feature type="disulfide bond" evidence="2">
    <location>
        <begin position="99"/>
        <end position="181"/>
    </location>
</feature>
<feature type="sequence variant" id="VAR_062083" description="In dbSNP:rs56291963.">
    <original>V</original>
    <variation>A</variation>
    <location>
        <position position="39"/>
    </location>
</feature>
<feature type="sequence variant" id="VAR_054361" description="In dbSNP:rs2254076.">
    <original>V</original>
    <variation>I</variation>
    <location>
        <position position="41"/>
    </location>
</feature>
<feature type="sequence variant" id="VAR_054362" description="In dbSNP:rs10769054.">
    <original>A</original>
    <variation>T</variation>
    <location>
        <position position="83"/>
    </location>
</feature>
<feature type="sequence variant" id="VAR_054363" description="In dbSNP:rs1566275.">
    <original>H</original>
    <variation>R</variation>
    <location>
        <position position="124"/>
    </location>
</feature>
<feature type="sequence variant" id="VAR_054364" description="In dbSNP:rs1995157.">
    <original>G</original>
    <variation>C</variation>
    <location>
        <position position="229"/>
    </location>
</feature>
<feature type="sequence variant" id="VAR_054365" description="In dbSNP:rs1995158.">
    <original>C</original>
    <variation>R</variation>
    <location>
        <position position="236"/>
    </location>
</feature>
<feature type="sequence variant" id="VAR_054366" description="In dbSNP:rs7934354.">
    <original>M</original>
    <variation>T</variation>
    <location>
        <position position="277"/>
    </location>
</feature>
<accession>Q8NGJ2</accession>
<accession>B9EH26</accession>
<accession>Q6IF79</accession>